<proteinExistence type="inferred from homology"/>
<comment type="function">
    <text evidence="1">Part of the twin-arginine translocation (Tat) system that transports large folded proteins containing a characteristic twin-arginine motif in their signal peptide across membranes. Together with TatC, TatB is part of a receptor directly interacting with Tat signal peptides. TatB may form an oligomeric binding site that transiently accommodates folded Tat precursor proteins before their translocation.</text>
</comment>
<comment type="subunit">
    <text evidence="1">The Tat system comprises two distinct complexes: a TatABC complex, containing multiple copies of TatA, TatB and TatC subunits, and a separate TatA complex, containing only TatA subunits. Substrates initially bind to the TatABC complex, which probably triggers association of the separate TatA complex to form the active translocon.</text>
</comment>
<comment type="subcellular location">
    <subcellularLocation>
        <location evidence="1">Cell inner membrane</location>
        <topology evidence="1">Single-pass membrane protein</topology>
    </subcellularLocation>
</comment>
<comment type="similarity">
    <text evidence="1">Belongs to the TatB family.</text>
</comment>
<protein>
    <recommendedName>
        <fullName evidence="1">Sec-independent protein translocase protein TatB</fullName>
    </recommendedName>
</protein>
<evidence type="ECO:0000255" key="1">
    <source>
        <dbReference type="HAMAP-Rule" id="MF_00237"/>
    </source>
</evidence>
<evidence type="ECO:0000256" key="2">
    <source>
        <dbReference type="SAM" id="MobiDB-lite"/>
    </source>
</evidence>
<organism>
    <name type="scientific">Polaromonas sp. (strain JS666 / ATCC BAA-500)</name>
    <dbReference type="NCBI Taxonomy" id="296591"/>
    <lineage>
        <taxon>Bacteria</taxon>
        <taxon>Pseudomonadati</taxon>
        <taxon>Pseudomonadota</taxon>
        <taxon>Betaproteobacteria</taxon>
        <taxon>Burkholderiales</taxon>
        <taxon>Comamonadaceae</taxon>
        <taxon>Polaromonas</taxon>
    </lineage>
</organism>
<feature type="chain" id="PRO_0000301206" description="Sec-independent protein translocase protein TatB">
    <location>
        <begin position="1"/>
        <end position="160"/>
    </location>
</feature>
<feature type="transmembrane region" description="Helical" evidence="1">
    <location>
        <begin position="1"/>
        <end position="21"/>
    </location>
</feature>
<feature type="region of interest" description="Disordered" evidence="2">
    <location>
        <begin position="70"/>
        <end position="100"/>
    </location>
</feature>
<feature type="region of interest" description="Disordered" evidence="2">
    <location>
        <begin position="133"/>
        <end position="160"/>
    </location>
</feature>
<feature type="compositionally biased region" description="Polar residues" evidence="2">
    <location>
        <begin position="89"/>
        <end position="100"/>
    </location>
</feature>
<keyword id="KW-0997">Cell inner membrane</keyword>
<keyword id="KW-1003">Cell membrane</keyword>
<keyword id="KW-0472">Membrane</keyword>
<keyword id="KW-0653">Protein transport</keyword>
<keyword id="KW-1185">Reference proteome</keyword>
<keyword id="KW-0811">Translocation</keyword>
<keyword id="KW-0812">Transmembrane</keyword>
<keyword id="KW-1133">Transmembrane helix</keyword>
<keyword id="KW-0813">Transport</keyword>
<sequence length="160" mass="17441">MIDLGVSKIALIGAVALIVIGPEKLPRVARTVGTLLGKAQRYVADVKQEVNRSMELDELKKMKDTVEGAARDVETSIQTSASDFEKSWSDATGSDASTATDELPGMVVFPEYKHPKKNWRLKTGATPQWYKARSGVRTKAQSGAARVARFRPQSGRSSSF</sequence>
<accession>Q12FC1</accession>
<dbReference type="EMBL" id="CP000316">
    <property type="protein sequence ID" value="ABE42771.1"/>
    <property type="molecule type" value="Genomic_DNA"/>
</dbReference>
<dbReference type="RefSeq" id="WP_011481774.1">
    <property type="nucleotide sequence ID" value="NC_007948.1"/>
</dbReference>
<dbReference type="SMR" id="Q12FC1"/>
<dbReference type="STRING" id="296591.Bpro_0815"/>
<dbReference type="KEGG" id="pol:Bpro_0815"/>
<dbReference type="eggNOG" id="COG1826">
    <property type="taxonomic scope" value="Bacteria"/>
</dbReference>
<dbReference type="HOGENOM" id="CLU_086034_1_1_4"/>
<dbReference type="OrthoDB" id="9816005at2"/>
<dbReference type="Proteomes" id="UP000001983">
    <property type="component" value="Chromosome"/>
</dbReference>
<dbReference type="GO" id="GO:0033281">
    <property type="term" value="C:TAT protein transport complex"/>
    <property type="evidence" value="ECO:0007669"/>
    <property type="project" value="UniProtKB-UniRule"/>
</dbReference>
<dbReference type="GO" id="GO:0008320">
    <property type="term" value="F:protein transmembrane transporter activity"/>
    <property type="evidence" value="ECO:0007669"/>
    <property type="project" value="UniProtKB-UniRule"/>
</dbReference>
<dbReference type="GO" id="GO:0043953">
    <property type="term" value="P:protein transport by the Tat complex"/>
    <property type="evidence" value="ECO:0007669"/>
    <property type="project" value="UniProtKB-UniRule"/>
</dbReference>
<dbReference type="Gene3D" id="1.20.5.3310">
    <property type="match status" value="1"/>
</dbReference>
<dbReference type="HAMAP" id="MF_00237">
    <property type="entry name" value="TatB"/>
    <property type="match status" value="1"/>
</dbReference>
<dbReference type="InterPro" id="IPR003369">
    <property type="entry name" value="TatA/B/E"/>
</dbReference>
<dbReference type="InterPro" id="IPR018448">
    <property type="entry name" value="TatB"/>
</dbReference>
<dbReference type="NCBIfam" id="TIGR01410">
    <property type="entry name" value="tatB"/>
    <property type="match status" value="1"/>
</dbReference>
<dbReference type="PANTHER" id="PTHR33162">
    <property type="entry name" value="SEC-INDEPENDENT PROTEIN TRANSLOCASE PROTEIN TATA, CHLOROPLASTIC"/>
    <property type="match status" value="1"/>
</dbReference>
<dbReference type="PANTHER" id="PTHR33162:SF1">
    <property type="entry name" value="SEC-INDEPENDENT PROTEIN TRANSLOCASE PROTEIN TATA, CHLOROPLASTIC"/>
    <property type="match status" value="1"/>
</dbReference>
<dbReference type="Pfam" id="PF02416">
    <property type="entry name" value="TatA_B_E"/>
    <property type="match status" value="1"/>
</dbReference>
<dbReference type="PRINTS" id="PR01506">
    <property type="entry name" value="TATBPROTEIN"/>
</dbReference>
<reference key="1">
    <citation type="journal article" date="2008" name="Appl. Environ. Microbiol.">
        <title>The genome of Polaromonas sp. strain JS666: insights into the evolution of a hydrocarbon- and xenobiotic-degrading bacterium, and features of relevance to biotechnology.</title>
        <authorList>
            <person name="Mattes T.E."/>
            <person name="Alexander A.K."/>
            <person name="Richardson P.M."/>
            <person name="Munk A.C."/>
            <person name="Han C.S."/>
            <person name="Stothard P."/>
            <person name="Coleman N.V."/>
        </authorList>
    </citation>
    <scope>NUCLEOTIDE SEQUENCE [LARGE SCALE GENOMIC DNA]</scope>
    <source>
        <strain>JS666 / ATCC BAA-500</strain>
    </source>
</reference>
<gene>
    <name evidence="1" type="primary">tatB</name>
    <name type="ordered locus">Bpro_0815</name>
</gene>
<name>TATB_POLSJ</name>